<keyword id="KW-0326">Glycosidase</keyword>
<keyword id="KW-0378">Hydrolase</keyword>
<keyword id="KW-0732">Signal</keyword>
<protein>
    <recommendedName>
        <fullName>Dextranase</fullName>
        <ecNumber>3.2.1.11</ecNumber>
    </recommendedName>
    <alternativeName>
        <fullName>Alpha-1,6-glucan-6-glucanohydrolase</fullName>
    </alternativeName>
</protein>
<organism>
    <name type="scientific">Streptococcus salivarius</name>
    <dbReference type="NCBI Taxonomy" id="1304"/>
    <lineage>
        <taxon>Bacteria</taxon>
        <taxon>Bacillati</taxon>
        <taxon>Bacillota</taxon>
        <taxon>Bacilli</taxon>
        <taxon>Lactobacillales</taxon>
        <taxon>Streptococcaceae</taxon>
        <taxon>Streptococcus</taxon>
    </lineage>
</organism>
<proteinExistence type="inferred from homology"/>
<feature type="signal peptide" evidence="1">
    <location>
        <begin position="1"/>
        <end position="38"/>
    </location>
</feature>
<feature type="chain" id="PRO_0000012240" description="Dextranase">
    <location>
        <begin position="39"/>
        <end position="822"/>
    </location>
</feature>
<feature type="region of interest" description="Disordered" evidence="2">
    <location>
        <begin position="607"/>
        <end position="669"/>
    </location>
</feature>
<feature type="region of interest" description="Disordered" evidence="2">
    <location>
        <begin position="683"/>
        <end position="788"/>
    </location>
</feature>
<feature type="compositionally biased region" description="Low complexity" evidence="2">
    <location>
        <begin position="619"/>
        <end position="636"/>
    </location>
</feature>
<feature type="compositionally biased region" description="Polar residues" evidence="2">
    <location>
        <begin position="693"/>
        <end position="705"/>
    </location>
</feature>
<feature type="compositionally biased region" description="Low complexity" evidence="2">
    <location>
        <begin position="706"/>
        <end position="761"/>
    </location>
</feature>
<feature type="compositionally biased region" description="Polar residues" evidence="2">
    <location>
        <begin position="771"/>
        <end position="788"/>
    </location>
</feature>
<accession>Q59979</accession>
<name>DEXT_STRSL</name>
<comment type="catalytic activity">
    <reaction>
        <text>Endohydrolysis of (1-&gt;6)-alpha-D-glucosidic linkages in dextran.</text>
        <dbReference type="EC" id="3.2.1.11"/>
    </reaction>
</comment>
<comment type="similarity">
    <text evidence="3">Belongs to the glycosyl hydrolase 66 family.</text>
</comment>
<evidence type="ECO:0000255" key="1"/>
<evidence type="ECO:0000256" key="2">
    <source>
        <dbReference type="SAM" id="MobiDB-lite"/>
    </source>
</evidence>
<evidence type="ECO:0000305" key="3"/>
<dbReference type="EC" id="3.2.1.11"/>
<dbReference type="EMBL" id="D29644">
    <property type="protein sequence ID" value="BAA06127.1"/>
    <property type="molecule type" value="Genomic_DNA"/>
</dbReference>
<dbReference type="PIR" id="JC4076">
    <property type="entry name" value="JC4076"/>
</dbReference>
<dbReference type="SMR" id="Q59979"/>
<dbReference type="STRING" id="1304.HMPREF3219_0200199"/>
<dbReference type="CAZy" id="GH66">
    <property type="family name" value="Glycoside Hydrolase Family 66"/>
</dbReference>
<dbReference type="GO" id="GO:0033904">
    <property type="term" value="F:dextranase activity"/>
    <property type="evidence" value="ECO:0007669"/>
    <property type="project" value="UniProtKB-EC"/>
</dbReference>
<dbReference type="CDD" id="cd14745">
    <property type="entry name" value="GH66"/>
    <property type="match status" value="1"/>
</dbReference>
<dbReference type="Gene3D" id="3.20.20.80">
    <property type="entry name" value="Glycosidases"/>
    <property type="match status" value="1"/>
</dbReference>
<dbReference type="Gene3D" id="2.60.40.1180">
    <property type="entry name" value="Golgi alpha-mannosidase II"/>
    <property type="match status" value="1"/>
</dbReference>
<dbReference type="Gene3D" id="2.60.40.10">
    <property type="entry name" value="Immunoglobulins"/>
    <property type="match status" value="1"/>
</dbReference>
<dbReference type="InterPro" id="IPR025092">
    <property type="entry name" value="Glyco_hydro_66"/>
</dbReference>
<dbReference type="InterPro" id="IPR013780">
    <property type="entry name" value="Glyco_hydro_b"/>
</dbReference>
<dbReference type="InterPro" id="IPR017853">
    <property type="entry name" value="Glycoside_hydrolase_SF"/>
</dbReference>
<dbReference type="InterPro" id="IPR013783">
    <property type="entry name" value="Ig-like_fold"/>
</dbReference>
<dbReference type="Pfam" id="PF13199">
    <property type="entry name" value="Glyco_hydro_66"/>
    <property type="match status" value="1"/>
</dbReference>
<dbReference type="SUPFAM" id="SSF51445">
    <property type="entry name" value="(Trans)glycosidases"/>
    <property type="match status" value="1"/>
</dbReference>
<sequence length="822" mass="87924">MTVNLTLQHASEIIGQDNVDLTLAAGASAKVSNLTVASEWLTNNTGYLVTISVNDKSGNVLSSKRAGLSVEDDWTVFPRYGIVAGSPTDQNSILVKNLEAYRKELELMKSMNINSYFFYDAYNEATDPFPEGVDSFVQKWNTWSHTQVDTKAVKELVDQVHKSGAVAMLYNMISADSNPKNPALPLAALAYNFYDSFGKKGEPMTYTIGDNPTQVYYDPANPDWQKYIAGVMKSAMDRMGFDGWQGDTIGDNRVTDYEHRNSTDEADSHMMSDSYASFINAMKDLIGEKYYITINDVNGGNDDKLAKARQDVVYNELWTNGGSVIPGRMQVAYGDLKARIDMVRNKTGKSLIVGAYMEEPGIDYTVPGGKATNGAGKDALAGKPLQADATLLVDATVAAAGGYHMSIAALANANAALNVLQSAYYPTQYLSVAKDTIRKLYNYQQFITAYENLLRGEGVTNSTQAVSTKNASGEILSKDALGVTGDQVWTFAKSGKGFSTVQMINMMGINAGWHNEEGYADNKTPDAQENLTVRLSLAGKTAQEAAKIADQVYVTSPDDWATSSMKKAQASLETDENGQPVLVISVPKLTLWNMLYIKEDTTATPVEPVTNQAGKKVDNTVTSEASSETAKSENTTVNKGSEAPTDTKPSVEAPKLDETTKPAPSVDELVNSAAVPVAIAVSETAHDKKDDNSVSNTDQGTVASDSITTPASEAASTAASTVSSEVSESVTVSSEPSETENSSEASTSESATPTTTAISESHAVVEPVASLTESESQASTSLVSETTSTIVSVAPSEVSESTSEEVILMDYQKTSIVGIDSL</sequence>
<reference key="1">
    <citation type="journal article" date="1995" name="Gene">
        <title>Cloning and sequencing of the gene coding for dextranase from Streptococcus salivarius.</title>
        <authorList>
            <person name="Ohnishi Y."/>
            <person name="Kubo S."/>
            <person name="Ono Y."/>
            <person name="Nozaki M."/>
            <person name="Gonda Y."/>
            <person name="Okano H."/>
            <person name="Matsuya T."/>
            <person name="Matsushiro A."/>
            <person name="Morita T."/>
        </authorList>
    </citation>
    <scope>NUCLEOTIDE SEQUENCE [GENOMIC DNA]</scope>
    <source>
        <strain>M-33</strain>
    </source>
</reference>
<gene>
    <name type="primary">dex</name>
    <name type="synonym">dexS</name>
</gene>